<accession>Q04SM4</accession>
<organism>
    <name type="scientific">Leptospira borgpetersenii serovar Hardjo-bovis (strain JB197)</name>
    <dbReference type="NCBI Taxonomy" id="355277"/>
    <lineage>
        <taxon>Bacteria</taxon>
        <taxon>Pseudomonadati</taxon>
        <taxon>Spirochaetota</taxon>
        <taxon>Spirochaetia</taxon>
        <taxon>Leptospirales</taxon>
        <taxon>Leptospiraceae</taxon>
        <taxon>Leptospira</taxon>
    </lineage>
</organism>
<name>SYK_LEPBJ</name>
<protein>
    <recommendedName>
        <fullName evidence="1">Lysine--tRNA ligase</fullName>
        <ecNumber evidence="1">6.1.1.6</ecNumber>
    </recommendedName>
    <alternativeName>
        <fullName evidence="1">Lysyl-tRNA synthetase</fullName>
        <shortName evidence="1">LysRS</shortName>
    </alternativeName>
</protein>
<gene>
    <name evidence="1" type="primary">lysS</name>
    <name type="ordered locus">LBJ_1523</name>
</gene>
<comment type="catalytic activity">
    <reaction evidence="1">
        <text>tRNA(Lys) + L-lysine + ATP = L-lysyl-tRNA(Lys) + AMP + diphosphate</text>
        <dbReference type="Rhea" id="RHEA:20792"/>
        <dbReference type="Rhea" id="RHEA-COMP:9696"/>
        <dbReference type="Rhea" id="RHEA-COMP:9697"/>
        <dbReference type="ChEBI" id="CHEBI:30616"/>
        <dbReference type="ChEBI" id="CHEBI:32551"/>
        <dbReference type="ChEBI" id="CHEBI:33019"/>
        <dbReference type="ChEBI" id="CHEBI:78442"/>
        <dbReference type="ChEBI" id="CHEBI:78529"/>
        <dbReference type="ChEBI" id="CHEBI:456215"/>
        <dbReference type="EC" id="6.1.1.6"/>
    </reaction>
</comment>
<comment type="cofactor">
    <cofactor evidence="1">
        <name>Mg(2+)</name>
        <dbReference type="ChEBI" id="CHEBI:18420"/>
    </cofactor>
    <text evidence="1">Binds 3 Mg(2+) ions per subunit.</text>
</comment>
<comment type="subunit">
    <text evidence="1">Homodimer.</text>
</comment>
<comment type="subcellular location">
    <subcellularLocation>
        <location evidence="1">Cytoplasm</location>
    </subcellularLocation>
</comment>
<comment type="similarity">
    <text evidence="1">Belongs to the class-II aminoacyl-tRNA synthetase family.</text>
</comment>
<reference key="1">
    <citation type="journal article" date="2006" name="Proc. Natl. Acad. Sci. U.S.A.">
        <title>Genome reduction in Leptospira borgpetersenii reflects limited transmission potential.</title>
        <authorList>
            <person name="Bulach D.M."/>
            <person name="Zuerner R.L."/>
            <person name="Wilson P."/>
            <person name="Seemann T."/>
            <person name="McGrath A."/>
            <person name="Cullen P.A."/>
            <person name="Davis J."/>
            <person name="Johnson M."/>
            <person name="Kuczek E."/>
            <person name="Alt D.P."/>
            <person name="Peterson-Burch B."/>
            <person name="Coppel R.L."/>
            <person name="Rood J.I."/>
            <person name="Davies J.K."/>
            <person name="Adler B."/>
        </authorList>
    </citation>
    <scope>NUCLEOTIDE SEQUENCE [LARGE SCALE GENOMIC DNA]</scope>
    <source>
        <strain>JB197</strain>
    </source>
</reference>
<evidence type="ECO:0000255" key="1">
    <source>
        <dbReference type="HAMAP-Rule" id="MF_00252"/>
    </source>
</evidence>
<sequence>MLDSNELIQQRIQKIEDLKNQGINPYPVRFFPDSKSKDIVEKFEKDPTGPETKFKLGGRLHSKRVMGKASFAHLKDSTGIIQLYATRDDLGEISYSIFKSLDLGDIIGLEGYLFKTQKGEVTLHVTSVELLAKCIRPLPVVKEKDGVIYDAFADVEQRYRMRYVDLVVNDHVRDTFITRSRIVSEIRNFLTNEGFLEVETPMMQPIAGGAAARPFVTHHNTLDMQLFLRIAPELYLKRLIVGGMDRVFELNRNFRNEGISTKHNPEFTMMEAYIAFADMNTMLDLTERLITHLAQKIHGALKIQYGKDLIDLSPPWRKITYTDIIKEYSGIDFSLITSLEEAKKKASELNVDVSKCNTIWKVADEVFSEKAEPNLIQPVFIIDYPKELSPLAKSNPDKPGYVERFEPYVAGREIGNAFTELNDPFDQKERFEDQVQQREAGDDEAFMMDEDYIRALEYGMPPTGGLGIGIDRLVMLLTDSHSIRDTILFPLMRPE</sequence>
<feature type="chain" id="PRO_1000012886" description="Lysine--tRNA ligase">
    <location>
        <begin position="1"/>
        <end position="495"/>
    </location>
</feature>
<feature type="binding site" evidence="1">
    <location>
        <position position="406"/>
    </location>
    <ligand>
        <name>Mg(2+)</name>
        <dbReference type="ChEBI" id="CHEBI:18420"/>
        <label>1</label>
    </ligand>
</feature>
<feature type="binding site" evidence="1">
    <location>
        <position position="413"/>
    </location>
    <ligand>
        <name>Mg(2+)</name>
        <dbReference type="ChEBI" id="CHEBI:18420"/>
        <label>1</label>
    </ligand>
</feature>
<feature type="binding site" evidence="1">
    <location>
        <position position="413"/>
    </location>
    <ligand>
        <name>Mg(2+)</name>
        <dbReference type="ChEBI" id="CHEBI:18420"/>
        <label>2</label>
    </ligand>
</feature>
<proteinExistence type="inferred from homology"/>
<dbReference type="EC" id="6.1.1.6" evidence="1"/>
<dbReference type="EMBL" id="CP000350">
    <property type="protein sequence ID" value="ABJ76096.1"/>
    <property type="molecule type" value="Genomic_DNA"/>
</dbReference>
<dbReference type="RefSeq" id="WP_011670315.1">
    <property type="nucleotide sequence ID" value="NC_008510.1"/>
</dbReference>
<dbReference type="SMR" id="Q04SM4"/>
<dbReference type="KEGG" id="lbj:LBJ_1523"/>
<dbReference type="HOGENOM" id="CLU_008255_6_0_12"/>
<dbReference type="Proteomes" id="UP000000656">
    <property type="component" value="Chromosome 1"/>
</dbReference>
<dbReference type="GO" id="GO:0005829">
    <property type="term" value="C:cytosol"/>
    <property type="evidence" value="ECO:0007669"/>
    <property type="project" value="TreeGrafter"/>
</dbReference>
<dbReference type="GO" id="GO:0005524">
    <property type="term" value="F:ATP binding"/>
    <property type="evidence" value="ECO:0007669"/>
    <property type="project" value="UniProtKB-UniRule"/>
</dbReference>
<dbReference type="GO" id="GO:0004824">
    <property type="term" value="F:lysine-tRNA ligase activity"/>
    <property type="evidence" value="ECO:0007669"/>
    <property type="project" value="UniProtKB-UniRule"/>
</dbReference>
<dbReference type="GO" id="GO:0000287">
    <property type="term" value="F:magnesium ion binding"/>
    <property type="evidence" value="ECO:0007669"/>
    <property type="project" value="UniProtKB-UniRule"/>
</dbReference>
<dbReference type="GO" id="GO:0000049">
    <property type="term" value="F:tRNA binding"/>
    <property type="evidence" value="ECO:0007669"/>
    <property type="project" value="TreeGrafter"/>
</dbReference>
<dbReference type="GO" id="GO:0006430">
    <property type="term" value="P:lysyl-tRNA aminoacylation"/>
    <property type="evidence" value="ECO:0007669"/>
    <property type="project" value="UniProtKB-UniRule"/>
</dbReference>
<dbReference type="CDD" id="cd00775">
    <property type="entry name" value="LysRS_core"/>
    <property type="match status" value="1"/>
</dbReference>
<dbReference type="CDD" id="cd04322">
    <property type="entry name" value="LysRS_N"/>
    <property type="match status" value="1"/>
</dbReference>
<dbReference type="FunFam" id="2.40.50.140:FF:000024">
    <property type="entry name" value="Lysine--tRNA ligase"/>
    <property type="match status" value="1"/>
</dbReference>
<dbReference type="FunFam" id="3.30.930.10:FF:000001">
    <property type="entry name" value="Lysine--tRNA ligase"/>
    <property type="match status" value="1"/>
</dbReference>
<dbReference type="Gene3D" id="3.30.930.10">
    <property type="entry name" value="Bira Bifunctional Protein, Domain 2"/>
    <property type="match status" value="1"/>
</dbReference>
<dbReference type="Gene3D" id="2.40.50.140">
    <property type="entry name" value="Nucleic acid-binding proteins"/>
    <property type="match status" value="1"/>
</dbReference>
<dbReference type="HAMAP" id="MF_00252">
    <property type="entry name" value="Lys_tRNA_synth_class2"/>
    <property type="match status" value="1"/>
</dbReference>
<dbReference type="InterPro" id="IPR004364">
    <property type="entry name" value="Aa-tRNA-synt_II"/>
</dbReference>
<dbReference type="InterPro" id="IPR006195">
    <property type="entry name" value="aa-tRNA-synth_II"/>
</dbReference>
<dbReference type="InterPro" id="IPR045864">
    <property type="entry name" value="aa-tRNA-synth_II/BPL/LPL"/>
</dbReference>
<dbReference type="InterPro" id="IPR002313">
    <property type="entry name" value="Lys-tRNA-ligase_II"/>
</dbReference>
<dbReference type="InterPro" id="IPR044136">
    <property type="entry name" value="Lys-tRNA-ligase_II_N"/>
</dbReference>
<dbReference type="InterPro" id="IPR018149">
    <property type="entry name" value="Lys-tRNA-synth_II_C"/>
</dbReference>
<dbReference type="InterPro" id="IPR012340">
    <property type="entry name" value="NA-bd_OB-fold"/>
</dbReference>
<dbReference type="InterPro" id="IPR004365">
    <property type="entry name" value="NA-bd_OB_tRNA"/>
</dbReference>
<dbReference type="NCBIfam" id="TIGR00499">
    <property type="entry name" value="lysS_bact"/>
    <property type="match status" value="1"/>
</dbReference>
<dbReference type="NCBIfam" id="NF001756">
    <property type="entry name" value="PRK00484.1"/>
    <property type="match status" value="1"/>
</dbReference>
<dbReference type="PANTHER" id="PTHR42918:SF15">
    <property type="entry name" value="LYSINE--TRNA LIGASE, CHLOROPLASTIC_MITOCHONDRIAL"/>
    <property type="match status" value="1"/>
</dbReference>
<dbReference type="PANTHER" id="PTHR42918">
    <property type="entry name" value="LYSYL-TRNA SYNTHETASE"/>
    <property type="match status" value="1"/>
</dbReference>
<dbReference type="Pfam" id="PF00152">
    <property type="entry name" value="tRNA-synt_2"/>
    <property type="match status" value="1"/>
</dbReference>
<dbReference type="Pfam" id="PF01336">
    <property type="entry name" value="tRNA_anti-codon"/>
    <property type="match status" value="1"/>
</dbReference>
<dbReference type="PRINTS" id="PR00982">
    <property type="entry name" value="TRNASYNTHLYS"/>
</dbReference>
<dbReference type="SUPFAM" id="SSF55681">
    <property type="entry name" value="Class II aaRS and biotin synthetases"/>
    <property type="match status" value="1"/>
</dbReference>
<dbReference type="SUPFAM" id="SSF50249">
    <property type="entry name" value="Nucleic acid-binding proteins"/>
    <property type="match status" value="1"/>
</dbReference>
<dbReference type="PROSITE" id="PS50862">
    <property type="entry name" value="AA_TRNA_LIGASE_II"/>
    <property type="match status" value="1"/>
</dbReference>
<keyword id="KW-0030">Aminoacyl-tRNA synthetase</keyword>
<keyword id="KW-0067">ATP-binding</keyword>
<keyword id="KW-0963">Cytoplasm</keyword>
<keyword id="KW-0436">Ligase</keyword>
<keyword id="KW-0460">Magnesium</keyword>
<keyword id="KW-0479">Metal-binding</keyword>
<keyword id="KW-0547">Nucleotide-binding</keyword>
<keyword id="KW-0648">Protein biosynthesis</keyword>